<evidence type="ECO:0000250" key="1">
    <source>
        <dbReference type="UniProtKB" id="Q8VWZ7"/>
    </source>
</evidence>
<evidence type="ECO:0000255" key="2"/>
<evidence type="ECO:0000255" key="3">
    <source>
        <dbReference type="RuleBase" id="RU000461"/>
    </source>
</evidence>
<evidence type="ECO:0000269" key="4">
    <source>
    </source>
</evidence>
<evidence type="ECO:0000269" key="5">
    <source>
    </source>
</evidence>
<evidence type="ECO:0000269" key="6">
    <source>
    </source>
</evidence>
<evidence type="ECO:0000269" key="7">
    <source>
    </source>
</evidence>
<evidence type="ECO:0000303" key="8">
    <source>
    </source>
</evidence>
<evidence type="ECO:0000305" key="9"/>
<evidence type="ECO:0000312" key="10">
    <source>
        <dbReference type="EMBL" id="AGN04215.1"/>
    </source>
</evidence>
<evidence type="ECO:0007744" key="11">
    <source>
        <dbReference type="PDB" id="5YLW"/>
    </source>
</evidence>
<evidence type="ECO:0007744" key="12">
    <source>
        <dbReference type="PDB" id="5YM3"/>
    </source>
</evidence>
<evidence type="ECO:0007829" key="13">
    <source>
        <dbReference type="PDB" id="5YLW"/>
    </source>
</evidence>
<organism evidence="10">
    <name type="scientific">Salvia miltiorrhiza</name>
    <name type="common">Chinese sage</name>
    <dbReference type="NCBI Taxonomy" id="226208"/>
    <lineage>
        <taxon>Eukaryota</taxon>
        <taxon>Viridiplantae</taxon>
        <taxon>Streptophyta</taxon>
        <taxon>Embryophyta</taxon>
        <taxon>Tracheophyta</taxon>
        <taxon>Spermatophyta</taxon>
        <taxon>Magnoliopsida</taxon>
        <taxon>eudicotyledons</taxon>
        <taxon>Gunneridae</taxon>
        <taxon>Pentapetalae</taxon>
        <taxon>asterids</taxon>
        <taxon>lamiids</taxon>
        <taxon>Lamiales</taxon>
        <taxon>Lamiaceae</taxon>
        <taxon>Nepetoideae</taxon>
        <taxon>Mentheae</taxon>
        <taxon>Salviinae</taxon>
        <taxon>Salvia</taxon>
        <taxon>Salvia incertae sedis</taxon>
    </lineage>
</organism>
<accession>S4UX02</accession>
<name>CYPH1_SALMI</name>
<protein>
    <recommendedName>
        <fullName evidence="8">Ferruginol synthase</fullName>
        <ecNumber evidence="4 5 6">1.14.14.175</ecNumber>
    </recommendedName>
    <alternativeName>
        <fullName evidence="8">Cytochrome P450 76AH1</fullName>
    </alternativeName>
</protein>
<keyword id="KW-0002">3D-structure</keyword>
<keyword id="KW-0256">Endoplasmic reticulum</keyword>
<keyword id="KW-0349">Heme</keyword>
<keyword id="KW-0408">Iron</keyword>
<keyword id="KW-0472">Membrane</keyword>
<keyword id="KW-0479">Metal-binding</keyword>
<keyword id="KW-0503">Monooxygenase</keyword>
<keyword id="KW-0521">NADP</keyword>
<keyword id="KW-0560">Oxidoreductase</keyword>
<keyword id="KW-0812">Transmembrane</keyword>
<keyword id="KW-1133">Transmembrane helix</keyword>
<proteinExistence type="evidence at protein level"/>
<gene>
    <name evidence="8" type="primary">CYP76AH1</name>
</gene>
<reference key="1">
    <citation type="journal article" date="2013" name="Proc. Natl. Acad. Sci. U.S.A.">
        <title>CYP76AH1 catalyzes turnover of miltiradiene in tanshinones biosynthesis and enables heterologous production of ferruginol in yeasts.</title>
        <authorList>
            <person name="Guo J."/>
            <person name="Zhou Y.J."/>
            <person name="Hillwig M.L."/>
            <person name="Shen Y."/>
            <person name="Yang L."/>
            <person name="Wang Y."/>
            <person name="Zhang X."/>
            <person name="Liu W."/>
            <person name="Peters R.J."/>
            <person name="Chen X."/>
            <person name="Zhao Z.K."/>
            <person name="Huang L."/>
        </authorList>
    </citation>
    <scope>NUCLEOTIDE SEQUENCE [MRNA]</scope>
    <scope>TISSUE SPECIFICITY</scope>
    <scope>FUNCTION</scope>
    <scope>CATALYTIC ACTIVITY</scope>
    <scope>BIOTECHNOLOGY</scope>
</reference>
<reference key="2">
    <citation type="journal article" date="2013" name="Org. Biomol. Chem.">
        <title>Characterization of CYP76AH4 clarifies phenolic diterpenoid biosynthesis in the Lamiaceae.</title>
        <authorList>
            <person name="Zi J."/>
            <person name="Peters R.J."/>
        </authorList>
    </citation>
    <scope>CATALYTIC ACTIVITY</scope>
</reference>
<reference key="3">
    <citation type="journal article" date="2016" name="Nat. Commun.">
        <title>Elucidation of the biosynthesis of carnosic acid and its reconstitution in yeast.</title>
        <authorList>
            <person name="Scheler U."/>
            <person name="Brandt W."/>
            <person name="Porzel A."/>
            <person name="Rothe K."/>
            <person name="Manzano D."/>
            <person name="Bozic D."/>
            <person name="Papaefthimiou D."/>
            <person name="Balcke G.U."/>
            <person name="Henning A."/>
            <person name="Lohse S."/>
            <person name="Marillonnet S."/>
            <person name="Kanellis A.K."/>
            <person name="Ferrer A."/>
            <person name="Tissier A."/>
        </authorList>
    </citation>
    <scope>FUNCTION</scope>
    <scope>CATALYTIC ACTIVITY</scope>
    <scope>MUTAGENESIS OF ASP-301; ASN-303 AND VAL-479</scope>
</reference>
<reference key="4">
    <citation type="journal article" date="2019" name="Biochem. Biophys. Res. Commun.">
        <title>Crystal structure of CYP76AH1 in 4-PI-bound state from Salvia miltiorrhiza.</title>
        <authorList>
            <person name="Gu M."/>
            <person name="Wang M."/>
            <person name="Guo J."/>
            <person name="Shi C."/>
            <person name="Deng J."/>
            <person name="Huang L."/>
            <person name="Huang L."/>
            <person name="Chang Z."/>
        </authorList>
    </citation>
    <scope>X-RAY CRYSTALLOGRAPHY (1.70 ANGSTROMS) IN COMPLEX WITH HEME</scope>
</reference>
<feature type="chain" id="PRO_0000430706" description="Ferruginol synthase">
    <location>
        <begin position="1"/>
        <end position="495"/>
    </location>
</feature>
<feature type="topological domain" description="Lumenal" evidence="1">
    <location>
        <position position="1"/>
    </location>
</feature>
<feature type="transmembrane region" description="Helical" evidence="2">
    <location>
        <begin position="2"/>
        <end position="22"/>
    </location>
</feature>
<feature type="topological domain" description="Cytoplasmic" evidence="1">
    <location>
        <begin position="23"/>
        <end position="495"/>
    </location>
</feature>
<feature type="binding site" description="axial binding residue" evidence="7 11 12">
    <location>
        <position position="437"/>
    </location>
    <ligand>
        <name>heme</name>
        <dbReference type="ChEBI" id="CHEBI:30413"/>
    </ligand>
    <ligandPart>
        <name>Fe</name>
        <dbReference type="ChEBI" id="CHEBI:18248"/>
    </ligandPart>
</feature>
<feature type="mutagenesis site" description="Acquires ferruginol monooxygenase activity; when associated with S-303 and F-479." evidence="6">
    <original>D</original>
    <variation>E</variation>
    <location>
        <position position="301"/>
    </location>
</feature>
<feature type="mutagenesis site" description="Acquires ferruginol monooxygenase activity; when associated with E-301 and F-479." evidence="6">
    <original>N</original>
    <variation>S</variation>
    <location>
        <position position="303"/>
    </location>
</feature>
<feature type="mutagenesis site" description="Acquires ferruginol monooxygenase activity; when associated with E-301 and S-303." evidence="6">
    <original>V</original>
    <variation>F</variation>
    <location>
        <position position="479"/>
    </location>
</feature>
<feature type="turn" evidence="13">
    <location>
        <begin position="36"/>
        <end position="38"/>
    </location>
</feature>
<feature type="helix" evidence="13">
    <location>
        <begin position="41"/>
        <end position="43"/>
    </location>
</feature>
<feature type="helix" evidence="13">
    <location>
        <begin position="48"/>
        <end position="59"/>
    </location>
</feature>
<feature type="strand" evidence="13">
    <location>
        <begin position="61"/>
        <end position="67"/>
    </location>
</feature>
<feature type="strand" evidence="13">
    <location>
        <begin position="70"/>
        <end position="75"/>
    </location>
</feature>
<feature type="helix" evidence="13">
    <location>
        <begin position="78"/>
        <end position="85"/>
    </location>
</feature>
<feature type="turn" evidence="13">
    <location>
        <begin position="86"/>
        <end position="92"/>
    </location>
</feature>
<feature type="helix" evidence="13">
    <location>
        <begin position="99"/>
        <end position="108"/>
    </location>
</feature>
<feature type="turn" evidence="13">
    <location>
        <begin position="111"/>
        <end position="113"/>
    </location>
</feature>
<feature type="helix" evidence="13">
    <location>
        <begin position="118"/>
        <end position="129"/>
    </location>
</feature>
<feature type="turn" evidence="13">
    <location>
        <begin position="130"/>
        <end position="132"/>
    </location>
</feature>
<feature type="helix" evidence="13">
    <location>
        <begin position="134"/>
        <end position="139"/>
    </location>
</feature>
<feature type="helix" evidence="13">
    <location>
        <begin position="141"/>
        <end position="161"/>
    </location>
</feature>
<feature type="helix" evidence="13">
    <location>
        <begin position="167"/>
        <end position="184"/>
    </location>
</feature>
<feature type="helix" evidence="13">
    <location>
        <begin position="194"/>
        <end position="210"/>
    </location>
</feature>
<feature type="helix" evidence="13">
    <location>
        <begin position="215"/>
        <end position="218"/>
    </location>
</feature>
<feature type="helix" evidence="13">
    <location>
        <begin position="220"/>
        <end position="225"/>
    </location>
</feature>
<feature type="helix" evidence="13">
    <location>
        <begin position="230"/>
        <end position="258"/>
    </location>
</feature>
<feature type="helix" evidence="13">
    <location>
        <begin position="268"/>
        <end position="278"/>
    </location>
</feature>
<feature type="helix" evidence="13">
    <location>
        <begin position="285"/>
        <end position="298"/>
    </location>
</feature>
<feature type="helix" evidence="13">
    <location>
        <begin position="300"/>
        <end position="316"/>
    </location>
</feature>
<feature type="helix" evidence="13">
    <location>
        <begin position="318"/>
        <end position="332"/>
    </location>
</feature>
<feature type="helix" evidence="13">
    <location>
        <begin position="340"/>
        <end position="345"/>
    </location>
</feature>
<feature type="helix" evidence="13">
    <location>
        <begin position="347"/>
        <end position="359"/>
    </location>
</feature>
<feature type="strand" evidence="13">
    <location>
        <begin position="375"/>
        <end position="377"/>
    </location>
</feature>
<feature type="strand" evidence="13">
    <location>
        <begin position="380"/>
        <end position="382"/>
    </location>
</feature>
<feature type="strand" evidence="13">
    <location>
        <begin position="387"/>
        <end position="390"/>
    </location>
</feature>
<feature type="helix" evidence="13">
    <location>
        <begin position="392"/>
        <end position="396"/>
    </location>
</feature>
<feature type="turn" evidence="13">
    <location>
        <begin position="399"/>
        <end position="401"/>
    </location>
</feature>
<feature type="strand" evidence="13">
    <location>
        <begin position="402"/>
        <end position="404"/>
    </location>
</feature>
<feature type="helix" evidence="13">
    <location>
        <begin position="410"/>
        <end position="413"/>
    </location>
</feature>
<feature type="strand" evidence="13">
    <location>
        <begin position="420"/>
        <end position="423"/>
    </location>
</feature>
<feature type="helix" evidence="13">
    <location>
        <begin position="433"/>
        <end position="435"/>
    </location>
</feature>
<feature type="helix" evidence="13">
    <location>
        <begin position="440"/>
        <end position="457"/>
    </location>
</feature>
<feature type="strand" evidence="13">
    <location>
        <begin position="459"/>
        <end position="463"/>
    </location>
</feature>
<feature type="helix" evidence="13">
    <location>
        <begin position="468"/>
        <end position="473"/>
    </location>
</feature>
<feature type="strand" evidence="13">
    <location>
        <begin position="478"/>
        <end position="480"/>
    </location>
</feature>
<feature type="strand" evidence="13">
    <location>
        <begin position="482"/>
        <end position="485"/>
    </location>
</feature>
<feature type="strand" evidence="13">
    <location>
        <begin position="488"/>
        <end position="492"/>
    </location>
</feature>
<dbReference type="EC" id="1.14.14.175" evidence="4 5 6"/>
<dbReference type="EMBL" id="JX422213">
    <property type="protein sequence ID" value="AGN04215.1"/>
    <property type="molecule type" value="mRNA"/>
</dbReference>
<dbReference type="PDB" id="5YLW">
    <property type="method" value="X-ray"/>
    <property type="resolution" value="1.70 A"/>
    <property type="chains" value="A=1-495"/>
</dbReference>
<dbReference type="PDB" id="5YM3">
    <property type="method" value="X-ray"/>
    <property type="resolution" value="2.60 A"/>
    <property type="chains" value="A=1-495"/>
</dbReference>
<dbReference type="PDB" id="7CB9">
    <property type="method" value="X-ray"/>
    <property type="resolution" value="1.90 A"/>
    <property type="chains" value="A=1-495"/>
</dbReference>
<dbReference type="PDBsum" id="5YLW"/>
<dbReference type="PDBsum" id="5YM3"/>
<dbReference type="PDBsum" id="7CB9"/>
<dbReference type="SMR" id="S4UX02"/>
<dbReference type="KEGG" id="ag:AGN04215"/>
<dbReference type="BRENDA" id="1.14.14.175">
    <property type="organism ID" value="9850"/>
</dbReference>
<dbReference type="GO" id="GO:0005789">
    <property type="term" value="C:endoplasmic reticulum membrane"/>
    <property type="evidence" value="ECO:0007669"/>
    <property type="project" value="UniProtKB-SubCell"/>
</dbReference>
<dbReference type="GO" id="GO:0020037">
    <property type="term" value="F:heme binding"/>
    <property type="evidence" value="ECO:0000314"/>
    <property type="project" value="UniProtKB"/>
</dbReference>
<dbReference type="GO" id="GO:0005506">
    <property type="term" value="F:iron ion binding"/>
    <property type="evidence" value="ECO:0007669"/>
    <property type="project" value="InterPro"/>
</dbReference>
<dbReference type="GO" id="GO:0016712">
    <property type="term" value="F:oxidoreductase activity, acting on paired donors, with incorporation or reduction of molecular oxygen, reduced flavin or flavoprotein as one donor, and incorporation of one atom of oxygen"/>
    <property type="evidence" value="ECO:0000314"/>
    <property type="project" value="UniProtKB"/>
</dbReference>
<dbReference type="GO" id="GO:0016102">
    <property type="term" value="P:diterpenoid biosynthetic process"/>
    <property type="evidence" value="ECO:0000314"/>
    <property type="project" value="UniProtKB"/>
</dbReference>
<dbReference type="CDD" id="cd11073">
    <property type="entry name" value="CYP76-like"/>
    <property type="match status" value="1"/>
</dbReference>
<dbReference type="FunFam" id="1.10.630.10:FF:000007">
    <property type="entry name" value="Cytochrome P450 76C4"/>
    <property type="match status" value="1"/>
</dbReference>
<dbReference type="Gene3D" id="1.10.630.10">
    <property type="entry name" value="Cytochrome P450"/>
    <property type="match status" value="1"/>
</dbReference>
<dbReference type="InterPro" id="IPR001128">
    <property type="entry name" value="Cyt_P450"/>
</dbReference>
<dbReference type="InterPro" id="IPR017972">
    <property type="entry name" value="Cyt_P450_CS"/>
</dbReference>
<dbReference type="InterPro" id="IPR002401">
    <property type="entry name" value="Cyt_P450_E_grp-I"/>
</dbReference>
<dbReference type="InterPro" id="IPR036396">
    <property type="entry name" value="Cyt_P450_sf"/>
</dbReference>
<dbReference type="PANTHER" id="PTHR47950">
    <property type="entry name" value="CYTOCHROME P450, FAMILY 76, SUBFAMILY C, POLYPEPTIDE 5-RELATED"/>
    <property type="match status" value="1"/>
</dbReference>
<dbReference type="PANTHER" id="PTHR47950:SF4">
    <property type="entry name" value="GERANIOL 8-HYDROXYLASE-LIKE"/>
    <property type="match status" value="1"/>
</dbReference>
<dbReference type="Pfam" id="PF00067">
    <property type="entry name" value="p450"/>
    <property type="match status" value="1"/>
</dbReference>
<dbReference type="PRINTS" id="PR00463">
    <property type="entry name" value="EP450I"/>
</dbReference>
<dbReference type="PRINTS" id="PR00385">
    <property type="entry name" value="P450"/>
</dbReference>
<dbReference type="SUPFAM" id="SSF48264">
    <property type="entry name" value="Cytochrome P450"/>
    <property type="match status" value="1"/>
</dbReference>
<dbReference type="PROSITE" id="PS00086">
    <property type="entry name" value="CYTOCHROME_P450"/>
    <property type="match status" value="1"/>
</dbReference>
<comment type="function">
    <text evidence="4 6">Cytochrome P450 enzyme (CYP) which catalyzes a unique two-electron oxidation cascade on abieta-8,11,13-triene to produce ferruginol, an intermediate in tanshinone biosynthesis.</text>
</comment>
<comment type="catalytic activity">
    <reaction evidence="4 5 6">
        <text>abieta-8,11,13-triene + reduced [NADPH--hemoprotein reductase] + O2 = ferruginol + oxidized [NADPH--hemoprotein reductase] + H2O + H(+)</text>
        <dbReference type="Rhea" id="RHEA:48080"/>
        <dbReference type="Rhea" id="RHEA-COMP:11964"/>
        <dbReference type="Rhea" id="RHEA-COMP:11965"/>
        <dbReference type="ChEBI" id="CHEBI:15377"/>
        <dbReference type="ChEBI" id="CHEBI:15378"/>
        <dbReference type="ChEBI" id="CHEBI:15379"/>
        <dbReference type="ChEBI" id="CHEBI:57618"/>
        <dbReference type="ChEBI" id="CHEBI:58210"/>
        <dbReference type="ChEBI" id="CHEBI:78274"/>
        <dbReference type="ChEBI" id="CHEBI:86062"/>
        <dbReference type="EC" id="1.14.14.175"/>
    </reaction>
    <physiologicalReaction direction="left-to-right" evidence="4 5 6">
        <dbReference type="Rhea" id="RHEA:48081"/>
    </physiologicalReaction>
</comment>
<comment type="cofactor">
    <cofactor evidence="7">
        <name>heme</name>
        <dbReference type="ChEBI" id="CHEBI:30413"/>
    </cofactor>
</comment>
<comment type="subcellular location">
    <subcellularLocation>
        <location evidence="9">Endoplasmic reticulum membrane</location>
        <topology evidence="2">Single-pass membrane protein</topology>
    </subcellularLocation>
</comment>
<comment type="tissue specificity">
    <text evidence="4">Expression is more abundant in the rhizome.</text>
</comment>
<comment type="biotechnology">
    <text evidence="8">Ferruginol is a widespread diterpenoid metabolite that serves as a bioactive natural product in its own right, and has been shown to exhibit a range of activities similar to that of the tanshinones such as anti-tumor and antibacterial properties. It therefore contributes to the medicinal effect of danshen.</text>
</comment>
<comment type="similarity">
    <text evidence="3">Belongs to the cytochrome P450 family.</text>
</comment>
<sequence>MDSFPLLAALFFIAATITFLSFRRRRNLPPGPFPYPIVGNMLQLGANPHQVFAKLSKRYGPLMSIHLGSLYTVIVSSPEMAKEILHRHGQVFSGRTIAQAVHACDHDKISMGFLPVASEWRDMRKICKEQMFSNQSMEASQGLRRQKLQQLLDHVQKCSDSGRAVDIREAAFITTLNLMSATLFSSQATEFDSKATMEFKEIIEGVATIVGVPNFADYFPILRPFDPQGVKRRADVFFGKLLAKIEGYLNERLESKRANPNAPKKDDFLEIVVDIIQANEFKLKTHHFTHLMLDLFVGGSDTNTTSIEWAMSELVMNPDKMARLKAELKSVAGDEKIVDESAMPKLPYLQAVIKEVMRIHPPGPLLLPRKAESDQEVNGYLIPKGTQILINAYAIGRDPSIWTDPETFDPERFLDNKIDFKGQDYELLPFGSGRRVCPGMPLATRILHMATATLVHNFDWKLEDDSTAAADHAGELFGVAVRRAVPLRIIPIVKS</sequence>